<evidence type="ECO:0000255" key="1">
    <source>
        <dbReference type="HAMAP-Rule" id="MF_00523"/>
    </source>
</evidence>
<protein>
    <recommendedName>
        <fullName evidence="1">UDP-3-O-acylglucosamine N-acyltransferase</fullName>
        <ecNumber evidence="1">2.3.1.191</ecNumber>
    </recommendedName>
</protein>
<sequence length="348" mass="36836">MADTFFFTPSRRLTVANVAELTGAKLLNPEFSNTVINTLSSLESAGKGSLVFVEHRKFSDALVGSSAVAVFCTNEIVFKVPESMAILVTSTPQRDFAQIGRILFPDSVKPMPWFGQREISPHAHIHPSAKLAGDVCIEAGAVIGRNVEIGSGSLIASTAVIGENCRIGCDCYIAPKVTVQYSLIGDKVHLYPGACIGQDGFGYIGGASGIEKVPQLGRVIIEDGVEIGANTTIDRGTFEDTIIGEGSKIDNLVQIAHNVKIGRYCLIAAQCGIAGSTSIGDMSQLGGSVGVADHIVIGKYVQIAAGSGVMNDIPDGEKWGGSPARPFKQWFREVAALRSIGKVKKEKR</sequence>
<comment type="function">
    <text evidence="1">Catalyzes the N-acylation of UDP-3-O-acylglucosamine using 3-hydroxyacyl-ACP as the acyl donor. Is involved in the biosynthesis of lipid A, a phosphorylated glycolipid that anchors the lipopolysaccharide to the outer membrane of the cell.</text>
</comment>
<comment type="catalytic activity">
    <reaction evidence="1">
        <text>a UDP-3-O-[(3R)-3-hydroxyacyl]-alpha-D-glucosamine + a (3R)-hydroxyacyl-[ACP] = a UDP-2-N,3-O-bis[(3R)-3-hydroxyacyl]-alpha-D-glucosamine + holo-[ACP] + H(+)</text>
        <dbReference type="Rhea" id="RHEA:53836"/>
        <dbReference type="Rhea" id="RHEA-COMP:9685"/>
        <dbReference type="Rhea" id="RHEA-COMP:9945"/>
        <dbReference type="ChEBI" id="CHEBI:15378"/>
        <dbReference type="ChEBI" id="CHEBI:64479"/>
        <dbReference type="ChEBI" id="CHEBI:78827"/>
        <dbReference type="ChEBI" id="CHEBI:137740"/>
        <dbReference type="ChEBI" id="CHEBI:137748"/>
        <dbReference type="EC" id="2.3.1.191"/>
    </reaction>
</comment>
<comment type="pathway">
    <text evidence="1">Bacterial outer membrane biogenesis; LPS lipid A biosynthesis.</text>
</comment>
<comment type="subunit">
    <text evidence="1">Homotrimer.</text>
</comment>
<comment type="similarity">
    <text evidence="1">Belongs to the transferase hexapeptide repeat family. LpxD subfamily.</text>
</comment>
<keyword id="KW-0012">Acyltransferase</keyword>
<keyword id="KW-0441">Lipid A biosynthesis</keyword>
<keyword id="KW-0444">Lipid biosynthesis</keyword>
<keyword id="KW-0443">Lipid metabolism</keyword>
<keyword id="KW-0677">Repeat</keyword>
<keyword id="KW-0808">Transferase</keyword>
<gene>
    <name evidence="1" type="primary">lpxD</name>
    <name type="ordered locus">BH06290</name>
</gene>
<name>LPXD_BARHE</name>
<dbReference type="EC" id="2.3.1.191" evidence="1"/>
<dbReference type="EMBL" id="AF461795">
    <property type="protein sequence ID" value="AAL66375.1"/>
    <property type="molecule type" value="Genomic_DNA"/>
</dbReference>
<dbReference type="EMBL" id="BX897699">
    <property type="protein sequence ID" value="CAF27433.1"/>
    <property type="molecule type" value="Genomic_DNA"/>
</dbReference>
<dbReference type="RefSeq" id="WP_011180553.1">
    <property type="nucleotide sequence ID" value="NZ_LRIJ02000001.1"/>
</dbReference>
<dbReference type="SMR" id="Q8VQ23"/>
<dbReference type="PaxDb" id="283166-BH06290"/>
<dbReference type="DNASU" id="2865601"/>
<dbReference type="EnsemblBacteria" id="CAF27433">
    <property type="protein sequence ID" value="CAF27433"/>
    <property type="gene ID" value="BH06290"/>
</dbReference>
<dbReference type="GeneID" id="92985645"/>
<dbReference type="KEGG" id="bhe:BH06290"/>
<dbReference type="eggNOG" id="COG1044">
    <property type="taxonomic scope" value="Bacteria"/>
</dbReference>
<dbReference type="OrthoDB" id="9784739at2"/>
<dbReference type="UniPathway" id="UPA00973"/>
<dbReference type="Proteomes" id="UP000000421">
    <property type="component" value="Chromosome"/>
</dbReference>
<dbReference type="GO" id="GO:0016020">
    <property type="term" value="C:membrane"/>
    <property type="evidence" value="ECO:0007669"/>
    <property type="project" value="GOC"/>
</dbReference>
<dbReference type="GO" id="GO:0016410">
    <property type="term" value="F:N-acyltransferase activity"/>
    <property type="evidence" value="ECO:0007669"/>
    <property type="project" value="InterPro"/>
</dbReference>
<dbReference type="GO" id="GO:0009245">
    <property type="term" value="P:lipid A biosynthetic process"/>
    <property type="evidence" value="ECO:0007669"/>
    <property type="project" value="UniProtKB-UniRule"/>
</dbReference>
<dbReference type="CDD" id="cd03352">
    <property type="entry name" value="LbH_LpxD"/>
    <property type="match status" value="1"/>
</dbReference>
<dbReference type="Gene3D" id="2.160.10.10">
    <property type="entry name" value="Hexapeptide repeat proteins"/>
    <property type="match status" value="1"/>
</dbReference>
<dbReference type="Gene3D" id="3.40.1390.10">
    <property type="entry name" value="MurE/MurF, N-terminal domain"/>
    <property type="match status" value="1"/>
</dbReference>
<dbReference type="HAMAP" id="MF_00523">
    <property type="entry name" value="LpxD"/>
    <property type="match status" value="1"/>
</dbReference>
<dbReference type="InterPro" id="IPR001451">
    <property type="entry name" value="Hexapep"/>
</dbReference>
<dbReference type="InterPro" id="IPR018357">
    <property type="entry name" value="Hexapep_transf_CS"/>
</dbReference>
<dbReference type="InterPro" id="IPR007691">
    <property type="entry name" value="LpxD"/>
</dbReference>
<dbReference type="InterPro" id="IPR011004">
    <property type="entry name" value="Trimer_LpxA-like_sf"/>
</dbReference>
<dbReference type="InterPro" id="IPR020573">
    <property type="entry name" value="UDP_GlcNAc_AcTrfase_non-rep"/>
</dbReference>
<dbReference type="NCBIfam" id="TIGR01853">
    <property type="entry name" value="lipid_A_lpxD"/>
    <property type="match status" value="1"/>
</dbReference>
<dbReference type="NCBIfam" id="NF002060">
    <property type="entry name" value="PRK00892.1"/>
    <property type="match status" value="1"/>
</dbReference>
<dbReference type="PANTHER" id="PTHR43378">
    <property type="entry name" value="UDP-3-O-ACYLGLUCOSAMINE N-ACYLTRANSFERASE"/>
    <property type="match status" value="1"/>
</dbReference>
<dbReference type="PANTHER" id="PTHR43378:SF2">
    <property type="entry name" value="UDP-3-O-ACYLGLUCOSAMINE N-ACYLTRANSFERASE 1, MITOCHONDRIAL-RELATED"/>
    <property type="match status" value="1"/>
</dbReference>
<dbReference type="Pfam" id="PF00132">
    <property type="entry name" value="Hexapep"/>
    <property type="match status" value="1"/>
</dbReference>
<dbReference type="Pfam" id="PF04613">
    <property type="entry name" value="LpxD"/>
    <property type="match status" value="1"/>
</dbReference>
<dbReference type="SUPFAM" id="SSF51161">
    <property type="entry name" value="Trimeric LpxA-like enzymes"/>
    <property type="match status" value="1"/>
</dbReference>
<dbReference type="PROSITE" id="PS00101">
    <property type="entry name" value="HEXAPEP_TRANSFERASES"/>
    <property type="match status" value="1"/>
</dbReference>
<accession>Q8VQ23</accession>
<feature type="chain" id="PRO_0000059646" description="UDP-3-O-acylglucosamine N-acyltransferase">
    <location>
        <begin position="1"/>
        <end position="348"/>
    </location>
</feature>
<feature type="active site" description="Proton acceptor" evidence="1">
    <location>
        <position position="257"/>
    </location>
</feature>
<reference key="1">
    <citation type="submission" date="2001-12" db="EMBL/GenBank/DDBJ databases">
        <title>Cloning, nucleotide sequencing, and expression of a hemin-binding protein of Bartonella henselae.</title>
        <authorList>
            <person name="Zimmermann R."/>
            <person name="Augustin K."/>
            <person name="Schaal K."/>
            <person name="Sander A."/>
        </authorList>
    </citation>
    <scope>NUCLEOTIDE SEQUENCE [GENOMIC DNA]</scope>
</reference>
<reference key="2">
    <citation type="journal article" date="2004" name="Proc. Natl. Acad. Sci. U.S.A.">
        <title>The louse-borne human pathogen Bartonella quintana is a genomic derivative of the zoonotic agent Bartonella henselae.</title>
        <authorList>
            <person name="Alsmark U.C.M."/>
            <person name="Frank A.C."/>
            <person name="Karlberg E.O."/>
            <person name="Legault B.-A."/>
            <person name="Ardell D.H."/>
            <person name="Canbaeck B."/>
            <person name="Eriksson A.-S."/>
            <person name="Naeslund A.K."/>
            <person name="Handley S.A."/>
            <person name="Huvet M."/>
            <person name="La Scola B."/>
            <person name="Holmberg M."/>
            <person name="Andersson S.G.E."/>
        </authorList>
    </citation>
    <scope>NUCLEOTIDE SEQUENCE [LARGE SCALE GENOMIC DNA]</scope>
    <source>
        <strain>ATCC 49882 / DSM 28221 / CCUG 30454 / Houston 1</strain>
    </source>
</reference>
<proteinExistence type="inferred from homology"/>
<organism>
    <name type="scientific">Bartonella henselae (strain ATCC 49882 / DSM 28221 / CCUG 30454 / Houston 1)</name>
    <name type="common">Rochalimaea henselae</name>
    <dbReference type="NCBI Taxonomy" id="283166"/>
    <lineage>
        <taxon>Bacteria</taxon>
        <taxon>Pseudomonadati</taxon>
        <taxon>Pseudomonadota</taxon>
        <taxon>Alphaproteobacteria</taxon>
        <taxon>Hyphomicrobiales</taxon>
        <taxon>Bartonellaceae</taxon>
        <taxon>Bartonella</taxon>
    </lineage>
</organism>